<dbReference type="EMBL" id="U15651">
    <property type="protein sequence ID" value="AAB60193.1"/>
    <property type="molecule type" value="Genomic_DNA"/>
</dbReference>
<dbReference type="EMBL" id="Z98741">
    <property type="protein sequence ID" value="CAB11410.1"/>
    <property type="molecule type" value="Genomic_DNA"/>
</dbReference>
<dbReference type="EMBL" id="AL583919">
    <property type="protein sequence ID" value="CAC30351.1"/>
    <property type="molecule type" value="Genomic_DNA"/>
</dbReference>
<dbReference type="PIR" id="S77651">
    <property type="entry name" value="S77651"/>
</dbReference>
<dbReference type="PIR" id="T44910">
    <property type="entry name" value="T44910"/>
</dbReference>
<dbReference type="RefSeq" id="NP_301635.1">
    <property type="nucleotide sequence ID" value="NC_002677.1"/>
</dbReference>
<dbReference type="RefSeq" id="WP_010907959.1">
    <property type="nucleotide sequence ID" value="NC_002677.1"/>
</dbReference>
<dbReference type="SMR" id="P46841"/>
<dbReference type="STRING" id="272631.gene:17574667"/>
<dbReference type="TCDB" id="1.S.8.1.2">
    <property type="family name" value="the bacterial/archaeal nanocompartment encapsulin shell protein3 (banc-sp3) family"/>
</dbReference>
<dbReference type="KEGG" id="mle:ML0841"/>
<dbReference type="PATRIC" id="fig|272631.5.peg.1556"/>
<dbReference type="Leproma" id="ML0841"/>
<dbReference type="eggNOG" id="COG0664">
    <property type="taxonomic scope" value="Bacteria"/>
</dbReference>
<dbReference type="HOGENOM" id="CLU_089302_0_0_11"/>
<dbReference type="OrthoDB" id="181419at2"/>
<dbReference type="Proteomes" id="UP000000806">
    <property type="component" value="Chromosome"/>
</dbReference>
<dbReference type="GO" id="GO:0005829">
    <property type="term" value="C:cytosol"/>
    <property type="evidence" value="ECO:0007669"/>
    <property type="project" value="UniProtKB-SubCell"/>
</dbReference>
<dbReference type="GO" id="GO:0140737">
    <property type="term" value="C:encapsulin nanocompartment"/>
    <property type="evidence" value="ECO:0000305"/>
    <property type="project" value="UniProtKB"/>
</dbReference>
<dbReference type="GO" id="GO:0005886">
    <property type="term" value="C:plasma membrane"/>
    <property type="evidence" value="ECO:0007669"/>
    <property type="project" value="UniProtKB-SubCell"/>
</dbReference>
<dbReference type="InterPro" id="IPR049822">
    <property type="entry name" value="Encap_f2a"/>
</dbReference>
<dbReference type="InterPro" id="IPR045641">
    <property type="entry name" value="SrpI-like"/>
</dbReference>
<dbReference type="NCBIfam" id="NF041162">
    <property type="entry name" value="encap_f2a"/>
    <property type="match status" value="1"/>
</dbReference>
<dbReference type="Pfam" id="PF19307">
    <property type="entry name" value="SrpI-like"/>
    <property type="match status" value="1"/>
</dbReference>
<dbReference type="SUPFAM" id="SSF56563">
    <property type="entry name" value="Major capsid protein gp5"/>
    <property type="match status" value="1"/>
</dbReference>
<keyword id="KW-1003">Cell membrane</keyword>
<keyword id="KW-0963">Cytoplasm</keyword>
<keyword id="KW-0903">Direct protein sequencing</keyword>
<keyword id="KW-1284">Encapsulin nanocompartment</keyword>
<keyword id="KW-0472">Membrane</keyword>
<keyword id="KW-1185">Reference proteome</keyword>
<feature type="chain" id="PRO_0000096512" description="Type 2A encapsulin shell protein">
    <location>
        <begin position="1"/>
        <end position="307"/>
    </location>
</feature>
<feature type="sequence conflict" description="In Ref. 1; AA sequence." evidence="5" ref="1">
    <original>R</original>
    <variation>A</variation>
    <location>
        <position position="55"/>
    </location>
</feature>
<feature type="sequence conflict" description="In Ref. 1; AA sequence." evidence="5" ref="1">
    <original>VAVKAEA</original>
    <variation>RRSVSQQ</variation>
    <location>
        <begin position="62"/>
        <end position="68"/>
    </location>
</feature>
<feature type="sequence conflict" description="In Ref. 1; AA sequence." evidence="5" ref="1">
    <original>SPR</original>
    <variation>P</variation>
    <location>
        <begin position="86"/>
        <end position="88"/>
    </location>
</feature>
<feature type="sequence conflict" description="In Ref. 1; AA sequence." evidence="5" ref="1">
    <original>K</original>
    <variation>Q</variation>
    <location>
        <position position="128"/>
    </location>
</feature>
<feature type="sequence conflict" description="In Ref. 1; AA sequence." evidence="5" ref="1">
    <location>
        <position position="150"/>
    </location>
</feature>
<feature type="sequence conflict" description="In Ref. 1; AA sequence." evidence="5" ref="1">
    <original>IR</original>
    <variation>F</variation>
    <location>
        <begin position="153"/>
        <end position="154"/>
    </location>
</feature>
<feature type="sequence conflict" description="In Ref. 1; AA sequence." evidence="5" ref="1">
    <original>DD</original>
    <variation>PT</variation>
    <location>
        <begin position="163"/>
        <end position="164"/>
    </location>
</feature>
<feature type="sequence conflict" description="In Ref. 1; AA sequence." evidence="5" ref="1">
    <original>L</original>
    <variation>A</variation>
    <location>
        <position position="168"/>
    </location>
</feature>
<feature type="sequence conflict" description="In Ref. 1; AA sequence." evidence="5" ref="1">
    <original>FGREA</original>
    <variation>AQRNN</variation>
    <location>
        <begin position="189"/>
        <end position="193"/>
    </location>
</feature>
<feature type="sequence conflict" description="In Ref. 1; AA sequence." evidence="5" ref="1">
    <original>S</original>
    <variation>VQ</variation>
    <location>
        <position position="204"/>
    </location>
</feature>
<feature type="sequence conflict" description="In Ref. 1; AA sequence." evidence="5" ref="1">
    <original>G</original>
    <variation>D</variation>
    <location>
        <position position="215"/>
    </location>
</feature>
<feature type="sequence conflict" description="In Ref. 1; AAB60193." evidence="5" ref="1">
    <original>R</original>
    <variation>L</variation>
    <location>
        <position position="237"/>
    </location>
</feature>
<feature type="sequence conflict" description="In Ref. 1; AA sequence." evidence="5" ref="1">
    <original>LS</original>
    <variation>DIQ</variation>
    <location>
        <begin position="261"/>
        <end position="262"/>
    </location>
</feature>
<feature type="sequence conflict" description="In Ref. 1; AAB60193." evidence="5" ref="1">
    <original>I</original>
    <variation>T</variation>
    <location>
        <position position="268"/>
    </location>
</feature>
<feature type="sequence conflict" description="In Ref. 1; AAB60193." evidence="5" ref="1">
    <original>AIA</original>
    <variation>SDR</variation>
    <location>
        <begin position="272"/>
        <end position="274"/>
    </location>
</feature>
<feature type="sequence conflict" description="In Ref. 1; AA sequence." evidence="5" ref="1">
    <original>T</original>
    <variation>Q</variation>
    <location>
        <position position="282"/>
    </location>
</feature>
<feature type="sequence conflict" description="In Ref. 1; AAB60193." evidence="5" ref="1">
    <original>A</original>
    <variation>V</variation>
    <location>
        <position position="285"/>
    </location>
</feature>
<feature type="sequence conflict" description="In Ref. 1; AA sequence." evidence="5" ref="1">
    <original>D</original>
    <variation>C</variation>
    <location>
        <position position="296"/>
    </location>
</feature>
<feature type="sequence conflict" description="In Ref. 1; AA sequence." evidence="5" ref="1">
    <original>D</original>
    <variation>C</variation>
    <location>
        <position position="301"/>
    </location>
</feature>
<feature type="sequence conflict" description="In Ref. 1; AA sequence." evidence="5" ref="1">
    <original>E</original>
    <variation>H</variation>
    <location>
        <position position="305"/>
    </location>
</feature>
<gene>
    <name evidence="5" type="primary">enc</name>
    <name evidence="4" type="synonym">mmpI</name>
    <name type="ordered locus">ML0841</name>
    <name type="ORF">MLCB22.45c</name>
</gene>
<accession>P46841</accession>
<accession>O32976</accession>
<protein>
    <recommendedName>
        <fullName evidence="1">Type 2A encapsulin shell protein</fullName>
    </recommendedName>
    <alternativeName>
        <fullName evidence="4">35 kDa antigen</fullName>
    </alternativeName>
    <alternativeName>
        <fullName evidence="4">Major membrane protein I</fullName>
        <shortName evidence="4">MMPI</shortName>
    </alternativeName>
</protein>
<reference key="1">
    <citation type="journal article" date="1995" name="Mol. Microbiol.">
        <title>Characterization of the gene encoding the immunodominant 35 kDa protein of Mycobacterium leprae.</title>
        <authorList>
            <person name="Winter N."/>
            <person name="Triccas J.A."/>
            <person name="Rivoire B."/>
            <person name="Pessolani M.C.V."/>
            <person name="Eiglmeier K."/>
            <person name="Lim E.-M."/>
            <person name="Hunter S.W."/>
            <person name="Brennan P.J."/>
            <person name="Britton W.J."/>
        </authorList>
    </citation>
    <scope>NUCLEOTIDE SEQUENCE [GENOMIC DNA]</scope>
    <scope>PROTEIN SEQUENCE OF 25-68; 71-93; 122-130; 145-170; 176-194; 198-210; 215-221; 243-262 AND 282-306</scope>
    <scope>ANTIGENICITY</scope>
    <scope>SUBUNIT</scope>
    <scope>SUBCELLULAR LOCATION</scope>
    <source>
        <strain>Armadillo isolate</strain>
    </source>
</reference>
<reference key="2">
    <citation type="journal article" date="1996" name="Infect. Immun.">
        <title>A 35-kilodalton protein is a major target of the human immune response to Mycobacterium leprae.</title>
        <authorList>
            <person name="Triccas J.A."/>
            <person name="Roche P.W."/>
            <person name="Winter N."/>
            <person name="Feng C.G."/>
            <person name="Butlin C.R."/>
            <person name="Britton W.J."/>
        </authorList>
    </citation>
    <scope>ANTIGENICITY</scope>
    <scope>SUBUNIT</scope>
</reference>
<reference key="3">
    <citation type="journal article" date="2001" name="Nature">
        <title>Massive gene decay in the leprosy bacillus.</title>
        <authorList>
            <person name="Cole S.T."/>
            <person name="Eiglmeier K."/>
            <person name="Parkhill J."/>
            <person name="James K.D."/>
            <person name="Thomson N.R."/>
            <person name="Wheeler P.R."/>
            <person name="Honore N."/>
            <person name="Garnier T."/>
            <person name="Churcher C.M."/>
            <person name="Harris D.E."/>
            <person name="Mungall K.L."/>
            <person name="Basham D."/>
            <person name="Brown D."/>
            <person name="Chillingworth T."/>
            <person name="Connor R."/>
            <person name="Davies R.M."/>
            <person name="Devlin K."/>
            <person name="Duthoy S."/>
            <person name="Feltwell T."/>
            <person name="Fraser A."/>
            <person name="Hamlin N."/>
            <person name="Holroyd S."/>
            <person name="Hornsby T."/>
            <person name="Jagels K."/>
            <person name="Lacroix C."/>
            <person name="Maclean J."/>
            <person name="Moule S."/>
            <person name="Murphy L.D."/>
            <person name="Oliver K."/>
            <person name="Quail M.A."/>
            <person name="Rajandream M.A."/>
            <person name="Rutherford K.M."/>
            <person name="Rutter S."/>
            <person name="Seeger K."/>
            <person name="Simon S."/>
            <person name="Simmonds M."/>
            <person name="Skelton J."/>
            <person name="Squares R."/>
            <person name="Squares S."/>
            <person name="Stevens K."/>
            <person name="Taylor K."/>
            <person name="Whitehead S."/>
            <person name="Woodward J.R."/>
            <person name="Barrell B.G."/>
        </authorList>
    </citation>
    <scope>NUCLEOTIDE SEQUENCE [LARGE SCALE GENOMIC DNA]</scope>
    <source>
        <strain>TN</strain>
    </source>
</reference>
<reference key="4">
    <citation type="journal article" date="2021" name="Nat. Commun.">
        <title>Large-scale computational discovery and analysis of virus-derived microbial nanocompartments.</title>
        <authorList>
            <person name="Andreas M.P."/>
            <person name="Giessen T.W."/>
        </authorList>
    </citation>
    <scope>CLASSIFICATION</scope>
</reference>
<name>ENCP2_MYCLE</name>
<proteinExistence type="evidence at protein level"/>
<evidence type="ECO:0000250" key="1">
    <source>
        <dbReference type="UniProtKB" id="Q55032"/>
    </source>
</evidence>
<evidence type="ECO:0000269" key="2">
    <source>
    </source>
</evidence>
<evidence type="ECO:0000269" key="3">
    <source>
    </source>
</evidence>
<evidence type="ECO:0000303" key="4">
    <source>
    </source>
</evidence>
<evidence type="ECO:0000305" key="5"/>
<evidence type="ECO:0000305" key="6">
    <source>
    </source>
</evidence>
<comment type="function">
    <text evidence="1 3">Shell component of a type 2A encapsulin nanocompartment. Forms encapsulin nanocompartments about 24 nm in diameter from 60 monomers. Probably encapsulates at least cysteine desulfurase (CyD, AC O32975) and allows passage of cysteine into its interior, probably involved in sulfur metabolism (By similarity). Expression in M.smegmatis generates a multimeric protein, whereas expression in E.coli does not (PubMed:8945562).</text>
</comment>
<comment type="subunit">
    <text evidence="1 2 3">Homooligomeric (PubMed:7476185, PubMed:8945562). The encapsulin nanocompartment is formed by 60 subunits; monomers form pentamers which assemble to form shells. There are 12 charged pores where the pentamers meet as well as 3-fold axis channels and dimer channels (By similarity).</text>
</comment>
<comment type="subcellular location">
    <subcellularLocation>
        <location evidence="1">Encapsulin nanocompartment</location>
    </subcellularLocation>
    <subcellularLocation>
        <location evidence="6">Cytoplasm</location>
        <location evidence="6">Cytosol</location>
    </subcellularLocation>
    <subcellularLocation>
        <location evidence="6">Cell membrane</location>
        <topology evidence="6">Peripheral membrane protein</topology>
    </subcellularLocation>
    <text evidence="6">Soluble or peripheral membrane protein.</text>
</comment>
<comment type="domain">
    <text evidence="1">Has 4 domains; an N-terminal arm not found in the type 1 subfamily, a discontinuous peripheral domain (P), an elongated loop (E) and the discontinuous axial domain (A).</text>
</comment>
<comment type="PTM">
    <text evidence="2">The N-terminus is blocked.</text>
</comment>
<comment type="miscellaneous">
    <text evidence="2 3">Dominant antigen for this bacteria, could possibly be used in vaccine formulation and/or for diagnosis (PubMed:7476185, PubMed:8945562). Protein expressed in M.smegmatis stimulates a gamma interferon-secreting T-cell proliferative response (PubMed:8945562).</text>
</comment>
<comment type="similarity">
    <text evidence="5">Belongs to the encapsulin family. Family 2A subfamily.</text>
</comment>
<organism>
    <name type="scientific">Mycobacterium leprae (strain TN)</name>
    <dbReference type="NCBI Taxonomy" id="272631"/>
    <lineage>
        <taxon>Bacteria</taxon>
        <taxon>Bacillati</taxon>
        <taxon>Actinomycetota</taxon>
        <taxon>Actinomycetes</taxon>
        <taxon>Mycobacteriales</taxon>
        <taxon>Mycobacteriaceae</taxon>
        <taxon>Mycobacterium</taxon>
    </lineage>
</organism>
<sequence>MTSAQNESQALGDLAAGQLANATKTVPQLSTITPRWLLHLLNWVPVEAGVYRVNRVVNPERVAVKAEAGAGTEAPLPETFVDYETSPREYTLRTISTLLDIHTRVSDLYSSPHDQITQQLRLTIETIKERQECELVNSPEFGLLAQVTPEQTIRTFAGAPTPDDLDALITKVWKMPSFFLTHPQGIAAFGREATYRGVPPVVVSLFGAQFITWRGIPLIPSDKVPVQDGETKFILVRTGEERQGVVGLFQPGLVGEQAPGLSVRFTGINQAAIATYLVTLYTSLAVLTDDALAVLDNVAVDQFHEYK</sequence>